<proteinExistence type="inferred from homology"/>
<evidence type="ECO:0000255" key="1">
    <source>
        <dbReference type="HAMAP-Rule" id="MF_00004"/>
    </source>
</evidence>
<dbReference type="EC" id="2.4.2.7" evidence="1"/>
<dbReference type="EMBL" id="AP009256">
    <property type="protein sequence ID" value="BAF39588.1"/>
    <property type="molecule type" value="Genomic_DNA"/>
</dbReference>
<dbReference type="RefSeq" id="WP_011743182.1">
    <property type="nucleotide sequence ID" value="NC_008618.1"/>
</dbReference>
<dbReference type="SMR" id="A1A1K5"/>
<dbReference type="STRING" id="367928.BAD_0807"/>
<dbReference type="PaxDb" id="1680-BADO_0856"/>
<dbReference type="GeneID" id="4557211"/>
<dbReference type="KEGG" id="bad:BAD_0807"/>
<dbReference type="HOGENOM" id="CLU_063339_3_0_11"/>
<dbReference type="UniPathway" id="UPA00588">
    <property type="reaction ID" value="UER00646"/>
</dbReference>
<dbReference type="Proteomes" id="UP000008702">
    <property type="component" value="Chromosome"/>
</dbReference>
<dbReference type="GO" id="GO:0005737">
    <property type="term" value="C:cytoplasm"/>
    <property type="evidence" value="ECO:0007669"/>
    <property type="project" value="UniProtKB-SubCell"/>
</dbReference>
<dbReference type="GO" id="GO:0002055">
    <property type="term" value="F:adenine binding"/>
    <property type="evidence" value="ECO:0007669"/>
    <property type="project" value="TreeGrafter"/>
</dbReference>
<dbReference type="GO" id="GO:0003999">
    <property type="term" value="F:adenine phosphoribosyltransferase activity"/>
    <property type="evidence" value="ECO:0007669"/>
    <property type="project" value="UniProtKB-UniRule"/>
</dbReference>
<dbReference type="GO" id="GO:0016208">
    <property type="term" value="F:AMP binding"/>
    <property type="evidence" value="ECO:0007669"/>
    <property type="project" value="TreeGrafter"/>
</dbReference>
<dbReference type="GO" id="GO:0006168">
    <property type="term" value="P:adenine salvage"/>
    <property type="evidence" value="ECO:0007669"/>
    <property type="project" value="InterPro"/>
</dbReference>
<dbReference type="GO" id="GO:0044209">
    <property type="term" value="P:AMP salvage"/>
    <property type="evidence" value="ECO:0007669"/>
    <property type="project" value="UniProtKB-UniRule"/>
</dbReference>
<dbReference type="GO" id="GO:0006166">
    <property type="term" value="P:purine ribonucleoside salvage"/>
    <property type="evidence" value="ECO:0007669"/>
    <property type="project" value="UniProtKB-KW"/>
</dbReference>
<dbReference type="CDD" id="cd06223">
    <property type="entry name" value="PRTases_typeI"/>
    <property type="match status" value="1"/>
</dbReference>
<dbReference type="FunFam" id="3.40.50.2020:FF:000021">
    <property type="entry name" value="Adenine phosphoribosyltransferase"/>
    <property type="match status" value="1"/>
</dbReference>
<dbReference type="Gene3D" id="3.40.50.2020">
    <property type="match status" value="1"/>
</dbReference>
<dbReference type="HAMAP" id="MF_00004">
    <property type="entry name" value="Aden_phosphoribosyltr"/>
    <property type="match status" value="1"/>
</dbReference>
<dbReference type="InterPro" id="IPR005764">
    <property type="entry name" value="Ade_phspho_trans"/>
</dbReference>
<dbReference type="InterPro" id="IPR000836">
    <property type="entry name" value="PRibTrfase_dom"/>
</dbReference>
<dbReference type="InterPro" id="IPR029057">
    <property type="entry name" value="PRTase-like"/>
</dbReference>
<dbReference type="InterPro" id="IPR050054">
    <property type="entry name" value="UPRTase/APRTase"/>
</dbReference>
<dbReference type="NCBIfam" id="TIGR01090">
    <property type="entry name" value="apt"/>
    <property type="match status" value="1"/>
</dbReference>
<dbReference type="NCBIfam" id="NF002634">
    <property type="entry name" value="PRK02304.1-3"/>
    <property type="match status" value="1"/>
</dbReference>
<dbReference type="NCBIfam" id="NF002636">
    <property type="entry name" value="PRK02304.1-5"/>
    <property type="match status" value="1"/>
</dbReference>
<dbReference type="PANTHER" id="PTHR32315">
    <property type="entry name" value="ADENINE PHOSPHORIBOSYLTRANSFERASE"/>
    <property type="match status" value="1"/>
</dbReference>
<dbReference type="PANTHER" id="PTHR32315:SF3">
    <property type="entry name" value="ADENINE PHOSPHORIBOSYLTRANSFERASE"/>
    <property type="match status" value="1"/>
</dbReference>
<dbReference type="Pfam" id="PF00156">
    <property type="entry name" value="Pribosyltran"/>
    <property type="match status" value="1"/>
</dbReference>
<dbReference type="SUPFAM" id="SSF53271">
    <property type="entry name" value="PRTase-like"/>
    <property type="match status" value="1"/>
</dbReference>
<dbReference type="PROSITE" id="PS00103">
    <property type="entry name" value="PUR_PYR_PR_TRANSFER"/>
    <property type="match status" value="1"/>
</dbReference>
<gene>
    <name evidence="1" type="primary">apt</name>
    <name type="ordered locus">BAD_0807</name>
</gene>
<organism>
    <name type="scientific">Bifidobacterium adolescentis (strain ATCC 15703 / DSM 20083 / NCTC 11814 / E194a)</name>
    <dbReference type="NCBI Taxonomy" id="367928"/>
    <lineage>
        <taxon>Bacteria</taxon>
        <taxon>Bacillati</taxon>
        <taxon>Actinomycetota</taxon>
        <taxon>Actinomycetes</taxon>
        <taxon>Bifidobacteriales</taxon>
        <taxon>Bifidobacteriaceae</taxon>
        <taxon>Bifidobacterium</taxon>
    </lineage>
</organism>
<feature type="chain" id="PRO_1000000258" description="Adenine phosphoribosyltransferase">
    <location>
        <begin position="1"/>
        <end position="193"/>
    </location>
</feature>
<comment type="function">
    <text evidence="1">Catalyzes a salvage reaction resulting in the formation of AMP, that is energically less costly than de novo synthesis.</text>
</comment>
<comment type="catalytic activity">
    <reaction evidence="1">
        <text>AMP + diphosphate = 5-phospho-alpha-D-ribose 1-diphosphate + adenine</text>
        <dbReference type="Rhea" id="RHEA:16609"/>
        <dbReference type="ChEBI" id="CHEBI:16708"/>
        <dbReference type="ChEBI" id="CHEBI:33019"/>
        <dbReference type="ChEBI" id="CHEBI:58017"/>
        <dbReference type="ChEBI" id="CHEBI:456215"/>
        <dbReference type="EC" id="2.4.2.7"/>
    </reaction>
</comment>
<comment type="pathway">
    <text evidence="1">Purine metabolism; AMP biosynthesis via salvage pathway; AMP from adenine: step 1/1.</text>
</comment>
<comment type="subunit">
    <text evidence="1">Homodimer.</text>
</comment>
<comment type="subcellular location">
    <subcellularLocation>
        <location evidence="1">Cytoplasm</location>
    </subcellularLocation>
</comment>
<comment type="similarity">
    <text evidence="1">Belongs to the purine/pyrimidine phosphoribosyltransferase family.</text>
</comment>
<accession>A1A1K5</accession>
<keyword id="KW-0963">Cytoplasm</keyword>
<keyword id="KW-0328">Glycosyltransferase</keyword>
<keyword id="KW-0660">Purine salvage</keyword>
<keyword id="KW-1185">Reference proteome</keyword>
<keyword id="KW-0808">Transferase</keyword>
<reference key="1">
    <citation type="submission" date="2006-12" db="EMBL/GenBank/DDBJ databases">
        <title>Bifidobacterium adolescentis complete genome sequence.</title>
        <authorList>
            <person name="Suzuki T."/>
            <person name="Tsuda Y."/>
            <person name="Kanou N."/>
            <person name="Inoue T."/>
            <person name="Kumazaki K."/>
            <person name="Nagano S."/>
            <person name="Hirai S."/>
            <person name="Tanaka K."/>
            <person name="Watanabe K."/>
        </authorList>
    </citation>
    <scope>NUCLEOTIDE SEQUENCE [LARGE SCALE GENOMIC DNA]</scope>
    <source>
        <strain>ATCC 15703 / DSM 20083 / NCTC 11814 / E194a</strain>
    </source>
</reference>
<name>APT_BIFAA</name>
<protein>
    <recommendedName>
        <fullName evidence="1">Adenine phosphoribosyltransferase</fullName>
        <shortName evidence="1">APRT</shortName>
        <ecNumber evidence="1">2.4.2.7</ecNumber>
    </recommendedName>
</protein>
<sequence>MAASDITVSGLNKVGAEDAAYLVSKIRTIPGFPKEGILFRDFMPVLADARAFGILMGALEAALPVDVDDFDMVVGLEARGFLFGPALAARLGKGFIAVRKAGKLPPETMSQSYDLEYGQASMEIETNVVHEGVRVLIVDDLIATGGTANAARSLIEKCGGVVAGFSFVMELTGIDGMKSLGDYPTSSLVCMPA</sequence>